<gene>
    <name type="primary">TFDP2</name>
    <name type="synonym">DP2</name>
</gene>
<reference key="1">
    <citation type="journal article" date="1995" name="Mol. Cell. Biol.">
        <title>In vivo association of E2F and DP family proteins.</title>
        <authorList>
            <person name="Wu C.-L."/>
            <person name="Zukerberg L.R."/>
            <person name="Ngwu C."/>
            <person name="Harlow E."/>
            <person name="Lees J.A."/>
        </authorList>
    </citation>
    <scope>NUCLEOTIDE SEQUENCE [MRNA] (ISOFORM DELTA)</scope>
    <scope>CHARACTERIZATION</scope>
</reference>
<reference key="2">
    <citation type="journal article" date="1995" name="Oncogene">
        <title>Cloning and characterization of human DP2, a novel dimerization partner of E2F.</title>
        <authorList>
            <person name="Zhang Y."/>
            <person name="Chellappan S.P."/>
        </authorList>
    </citation>
    <scope>NUCLEOTIDE SEQUENCE [MRNA] (ISOFORM EPSILON)</scope>
    <source>
        <tissue>Kidney</tissue>
    </source>
</reference>
<reference key="3">
    <citation type="submission" date="2003-12" db="EMBL/GenBank/DDBJ databases">
        <authorList>
            <consortium name="NIEHS SNPs program"/>
        </authorList>
    </citation>
    <scope>NUCLEOTIDE SEQUENCE [GENOMIC DNA]</scope>
    <scope>VARIANT SER-81</scope>
</reference>
<reference key="4">
    <citation type="journal article" date="2004" name="Nat. Genet.">
        <title>Complete sequencing and characterization of 21,243 full-length human cDNAs.</title>
        <authorList>
            <person name="Ota T."/>
            <person name="Suzuki Y."/>
            <person name="Nishikawa T."/>
            <person name="Otsuki T."/>
            <person name="Sugiyama T."/>
            <person name="Irie R."/>
            <person name="Wakamatsu A."/>
            <person name="Hayashi K."/>
            <person name="Sato H."/>
            <person name="Nagai K."/>
            <person name="Kimura K."/>
            <person name="Makita H."/>
            <person name="Sekine M."/>
            <person name="Obayashi M."/>
            <person name="Nishi T."/>
            <person name="Shibahara T."/>
            <person name="Tanaka T."/>
            <person name="Ishii S."/>
            <person name="Yamamoto J."/>
            <person name="Saito K."/>
            <person name="Kawai Y."/>
            <person name="Isono Y."/>
            <person name="Nakamura Y."/>
            <person name="Nagahari K."/>
            <person name="Murakami K."/>
            <person name="Yasuda T."/>
            <person name="Iwayanagi T."/>
            <person name="Wagatsuma M."/>
            <person name="Shiratori A."/>
            <person name="Sudo H."/>
            <person name="Hosoiri T."/>
            <person name="Kaku Y."/>
            <person name="Kodaira H."/>
            <person name="Kondo H."/>
            <person name="Sugawara M."/>
            <person name="Takahashi M."/>
            <person name="Kanda K."/>
            <person name="Yokoi T."/>
            <person name="Furuya T."/>
            <person name="Kikkawa E."/>
            <person name="Omura Y."/>
            <person name="Abe K."/>
            <person name="Kamihara K."/>
            <person name="Katsuta N."/>
            <person name="Sato K."/>
            <person name="Tanikawa M."/>
            <person name="Yamazaki M."/>
            <person name="Ninomiya K."/>
            <person name="Ishibashi T."/>
            <person name="Yamashita H."/>
            <person name="Murakawa K."/>
            <person name="Fujimori K."/>
            <person name="Tanai H."/>
            <person name="Kimata M."/>
            <person name="Watanabe M."/>
            <person name="Hiraoka S."/>
            <person name="Chiba Y."/>
            <person name="Ishida S."/>
            <person name="Ono Y."/>
            <person name="Takiguchi S."/>
            <person name="Watanabe S."/>
            <person name="Yosida M."/>
            <person name="Hotuta T."/>
            <person name="Kusano J."/>
            <person name="Kanehori K."/>
            <person name="Takahashi-Fujii A."/>
            <person name="Hara H."/>
            <person name="Tanase T.-O."/>
            <person name="Nomura Y."/>
            <person name="Togiya S."/>
            <person name="Komai F."/>
            <person name="Hara R."/>
            <person name="Takeuchi K."/>
            <person name="Arita M."/>
            <person name="Imose N."/>
            <person name="Musashino K."/>
            <person name="Yuuki H."/>
            <person name="Oshima A."/>
            <person name="Sasaki N."/>
            <person name="Aotsuka S."/>
            <person name="Yoshikawa Y."/>
            <person name="Matsunawa H."/>
            <person name="Ichihara T."/>
            <person name="Shiohata N."/>
            <person name="Sano S."/>
            <person name="Moriya S."/>
            <person name="Momiyama H."/>
            <person name="Satoh N."/>
            <person name="Takami S."/>
            <person name="Terashima Y."/>
            <person name="Suzuki O."/>
            <person name="Nakagawa S."/>
            <person name="Senoh A."/>
            <person name="Mizoguchi H."/>
            <person name="Goto Y."/>
            <person name="Shimizu F."/>
            <person name="Wakebe H."/>
            <person name="Hishigaki H."/>
            <person name="Watanabe T."/>
            <person name="Sugiyama A."/>
            <person name="Takemoto M."/>
            <person name="Kawakami B."/>
            <person name="Yamazaki M."/>
            <person name="Watanabe K."/>
            <person name="Kumagai A."/>
            <person name="Itakura S."/>
            <person name="Fukuzumi Y."/>
            <person name="Fujimori Y."/>
            <person name="Komiyama M."/>
            <person name="Tashiro H."/>
            <person name="Tanigami A."/>
            <person name="Fujiwara T."/>
            <person name="Ono T."/>
            <person name="Yamada K."/>
            <person name="Fujii Y."/>
            <person name="Ozaki K."/>
            <person name="Hirao M."/>
            <person name="Ohmori Y."/>
            <person name="Kawabata A."/>
            <person name="Hikiji T."/>
            <person name="Kobatake N."/>
            <person name="Inagaki H."/>
            <person name="Ikema Y."/>
            <person name="Okamoto S."/>
            <person name="Okitani R."/>
            <person name="Kawakami T."/>
            <person name="Noguchi S."/>
            <person name="Itoh T."/>
            <person name="Shigeta K."/>
            <person name="Senba T."/>
            <person name="Matsumura K."/>
            <person name="Nakajima Y."/>
            <person name="Mizuno T."/>
            <person name="Morinaga M."/>
            <person name="Sasaki M."/>
            <person name="Togashi T."/>
            <person name="Oyama M."/>
            <person name="Hata H."/>
            <person name="Watanabe M."/>
            <person name="Komatsu T."/>
            <person name="Mizushima-Sugano J."/>
            <person name="Satoh T."/>
            <person name="Shirai Y."/>
            <person name="Takahashi Y."/>
            <person name="Nakagawa K."/>
            <person name="Okumura K."/>
            <person name="Nagase T."/>
            <person name="Nomura N."/>
            <person name="Kikuchi H."/>
            <person name="Masuho Y."/>
            <person name="Yamashita R."/>
            <person name="Nakai K."/>
            <person name="Yada T."/>
            <person name="Nakamura Y."/>
            <person name="Ohara O."/>
            <person name="Isogai T."/>
            <person name="Sugano S."/>
        </authorList>
    </citation>
    <scope>NUCLEOTIDE SEQUENCE [LARGE SCALE MRNA] (ISOFORMS 6 AND 7)</scope>
    <source>
        <tissue>Thymus</tissue>
    </source>
</reference>
<reference key="5">
    <citation type="submission" date="2004-07" db="EMBL/GenBank/DDBJ databases">
        <title>Full-length cDNA libraries and normalization.</title>
        <authorList>
            <person name="Li W.B."/>
            <person name="Gruber C."/>
            <person name="Jessee J."/>
            <person name="Polayes D."/>
        </authorList>
    </citation>
    <scope>NUCLEOTIDE SEQUENCE [LARGE SCALE MRNA] (ISOFORM ALPHA)</scope>
    <source>
        <tissue>Neuroblastoma</tissue>
    </source>
</reference>
<reference key="6">
    <citation type="journal article" date="2006" name="Nature">
        <title>The DNA sequence, annotation and analysis of human chromosome 3.</title>
        <authorList>
            <person name="Muzny D.M."/>
            <person name="Scherer S.E."/>
            <person name="Kaul R."/>
            <person name="Wang J."/>
            <person name="Yu J."/>
            <person name="Sudbrak R."/>
            <person name="Buhay C.J."/>
            <person name="Chen R."/>
            <person name="Cree A."/>
            <person name="Ding Y."/>
            <person name="Dugan-Rocha S."/>
            <person name="Gill R."/>
            <person name="Gunaratne P."/>
            <person name="Harris R.A."/>
            <person name="Hawes A.C."/>
            <person name="Hernandez J."/>
            <person name="Hodgson A.V."/>
            <person name="Hume J."/>
            <person name="Jackson A."/>
            <person name="Khan Z.M."/>
            <person name="Kovar-Smith C."/>
            <person name="Lewis L.R."/>
            <person name="Lozado R.J."/>
            <person name="Metzker M.L."/>
            <person name="Milosavljevic A."/>
            <person name="Miner G.R."/>
            <person name="Morgan M.B."/>
            <person name="Nazareth L.V."/>
            <person name="Scott G."/>
            <person name="Sodergren E."/>
            <person name="Song X.-Z."/>
            <person name="Steffen D."/>
            <person name="Wei S."/>
            <person name="Wheeler D.A."/>
            <person name="Wright M.W."/>
            <person name="Worley K.C."/>
            <person name="Yuan Y."/>
            <person name="Zhang Z."/>
            <person name="Adams C.Q."/>
            <person name="Ansari-Lari M.A."/>
            <person name="Ayele M."/>
            <person name="Brown M.J."/>
            <person name="Chen G."/>
            <person name="Chen Z."/>
            <person name="Clendenning J."/>
            <person name="Clerc-Blankenburg K.P."/>
            <person name="Chen R."/>
            <person name="Chen Z."/>
            <person name="Davis C."/>
            <person name="Delgado O."/>
            <person name="Dinh H.H."/>
            <person name="Dong W."/>
            <person name="Draper H."/>
            <person name="Ernst S."/>
            <person name="Fu G."/>
            <person name="Gonzalez-Garay M.L."/>
            <person name="Garcia D.K."/>
            <person name="Gillett W."/>
            <person name="Gu J."/>
            <person name="Hao B."/>
            <person name="Haugen E."/>
            <person name="Havlak P."/>
            <person name="He X."/>
            <person name="Hennig S."/>
            <person name="Hu S."/>
            <person name="Huang W."/>
            <person name="Jackson L.R."/>
            <person name="Jacob L.S."/>
            <person name="Kelly S.H."/>
            <person name="Kube M."/>
            <person name="Levy R."/>
            <person name="Li Z."/>
            <person name="Liu B."/>
            <person name="Liu J."/>
            <person name="Liu W."/>
            <person name="Lu J."/>
            <person name="Maheshwari M."/>
            <person name="Nguyen B.-V."/>
            <person name="Okwuonu G.O."/>
            <person name="Palmeiri A."/>
            <person name="Pasternak S."/>
            <person name="Perez L.M."/>
            <person name="Phelps K.A."/>
            <person name="Plopper F.J."/>
            <person name="Qiang B."/>
            <person name="Raymond C."/>
            <person name="Rodriguez R."/>
            <person name="Saenphimmachak C."/>
            <person name="Santibanez J."/>
            <person name="Shen H."/>
            <person name="Shen Y."/>
            <person name="Subramanian S."/>
            <person name="Tabor P.E."/>
            <person name="Verduzco D."/>
            <person name="Waldron L."/>
            <person name="Wang J."/>
            <person name="Wang J."/>
            <person name="Wang Q."/>
            <person name="Williams G.A."/>
            <person name="Wong G.K.-S."/>
            <person name="Yao Z."/>
            <person name="Zhang J."/>
            <person name="Zhang X."/>
            <person name="Zhao G."/>
            <person name="Zhou J."/>
            <person name="Zhou Y."/>
            <person name="Nelson D."/>
            <person name="Lehrach H."/>
            <person name="Reinhardt R."/>
            <person name="Naylor S.L."/>
            <person name="Yang H."/>
            <person name="Olson M."/>
            <person name="Weinstock G."/>
            <person name="Gibbs R.A."/>
        </authorList>
    </citation>
    <scope>NUCLEOTIDE SEQUENCE [LARGE SCALE GENOMIC DNA]</scope>
</reference>
<reference key="7">
    <citation type="submission" date="2005-09" db="EMBL/GenBank/DDBJ databases">
        <authorList>
            <person name="Mural R.J."/>
            <person name="Istrail S."/>
            <person name="Sutton G.G."/>
            <person name="Florea L."/>
            <person name="Halpern A.L."/>
            <person name="Mobarry C.M."/>
            <person name="Lippert R."/>
            <person name="Walenz B."/>
            <person name="Shatkay H."/>
            <person name="Dew I."/>
            <person name="Miller J.R."/>
            <person name="Flanigan M.J."/>
            <person name="Edwards N.J."/>
            <person name="Bolanos R."/>
            <person name="Fasulo D."/>
            <person name="Halldorsson B.V."/>
            <person name="Hannenhalli S."/>
            <person name="Turner R."/>
            <person name="Yooseph S."/>
            <person name="Lu F."/>
            <person name="Nusskern D.R."/>
            <person name="Shue B.C."/>
            <person name="Zheng X.H."/>
            <person name="Zhong F."/>
            <person name="Delcher A.L."/>
            <person name="Huson D.H."/>
            <person name="Kravitz S.A."/>
            <person name="Mouchard L."/>
            <person name="Reinert K."/>
            <person name="Remington K.A."/>
            <person name="Clark A.G."/>
            <person name="Waterman M.S."/>
            <person name="Eichler E.E."/>
            <person name="Adams M.D."/>
            <person name="Hunkapiller M.W."/>
            <person name="Myers E.W."/>
            <person name="Venter J.C."/>
        </authorList>
    </citation>
    <scope>NUCLEOTIDE SEQUENCE [LARGE SCALE GENOMIC DNA]</scope>
</reference>
<reference key="8">
    <citation type="journal article" date="2004" name="Genome Res.">
        <title>The status, quality, and expansion of the NIH full-length cDNA project: the Mammalian Gene Collection (MGC).</title>
        <authorList>
            <consortium name="The MGC Project Team"/>
        </authorList>
    </citation>
    <scope>NUCLEOTIDE SEQUENCE [LARGE SCALE MRNA] (ISOFORM EPSILON)</scope>
    <source>
        <tissue>Placenta</tissue>
    </source>
</reference>
<reference key="9">
    <citation type="submission" date="1996-12" db="EMBL/GenBank/DDBJ databases">
        <title>Transcriptional activation and expression of DP transcription factors during cell cycle and TPA-induced U937 differentiation.</title>
        <authorList>
            <person name="Zhang Y."/>
            <person name="Chellappan S.P."/>
        </authorList>
    </citation>
    <scope>NUCLEOTIDE SEQUENCE [MRNA] OF 1-102 (ISOFORM ALPHA)</scope>
</reference>
<reference key="10">
    <citation type="journal article" date="2007" name="BMC Genomics">
        <title>The full-ORF clone resource of the German cDNA consortium.</title>
        <authorList>
            <person name="Bechtel S."/>
            <person name="Rosenfelder H."/>
            <person name="Duda A."/>
            <person name="Schmidt C.P."/>
            <person name="Ernst U."/>
            <person name="Wellenreuther R."/>
            <person name="Mehrle A."/>
            <person name="Schuster C."/>
            <person name="Bahr A."/>
            <person name="Bloecker H."/>
            <person name="Heubner D."/>
            <person name="Hoerlein A."/>
            <person name="Michel G."/>
            <person name="Wedler H."/>
            <person name="Koehrer K."/>
            <person name="Ottenwaelder B."/>
            <person name="Poustka A."/>
            <person name="Wiemann S."/>
            <person name="Schupp I."/>
        </authorList>
    </citation>
    <scope>NUCLEOTIDE SEQUENCE [LARGE SCALE MRNA] OF 3-418 (ISOFORM 8)</scope>
    <source>
        <tissue>Testis</tissue>
    </source>
</reference>
<reference key="11">
    <citation type="journal article" date="1996" name="Proc. Natl. Acad. Sci. U.S.A.">
        <title>DP-2, a heterodimeric partner of E2F: identification and characterization of DP-2 proteins expressed in vivo.</title>
        <authorList>
            <person name="Rogers K.T."/>
            <person name="Higgins P.D.R."/>
            <person name="Milla M.M."/>
            <person name="Phillips R.S."/>
            <person name="Horowitz J.M."/>
        </authorList>
    </citation>
    <scope>NUCLEOTIDE SEQUENCE [MRNA] OF 62-79 (ISOFORM DELTA)</scope>
    <scope>ALTERNATIVE SPLICING</scope>
    <source>
        <tissue>Keratinocyte</tissue>
    </source>
</reference>
<reference key="12">
    <citation type="journal article" date="2005" name="Cell">
        <title>Structure of the Rb C-terminal domain bound to E2F1-DP1: a mechanism for phosphorylation-induced E2F release.</title>
        <authorList>
            <person name="Rubin S.M."/>
            <person name="Gall A.-L."/>
            <person name="Zheng N."/>
            <person name="Pavletich N.P."/>
        </authorList>
    </citation>
    <scope>INTERACTION WITH RB1 AND E2F4</scope>
</reference>
<reference key="13">
    <citation type="journal article" date="2007" name="Mol. Cell">
        <title>Evolutionarily conserved multisubunit RBL2/p130 and E2F4 protein complex represses human cell cycle-dependent genes in quiescence.</title>
        <authorList>
            <person name="Litovchick L."/>
            <person name="Sadasivam S."/>
            <person name="Florens L."/>
            <person name="Zhu X."/>
            <person name="Swanson S.K."/>
            <person name="Velmurugan S."/>
            <person name="Chen R."/>
            <person name="Washburn M.P."/>
            <person name="Liu X.S."/>
            <person name="DeCaprio J.A."/>
        </authorList>
    </citation>
    <scope>IDENTIFICATION IN THE DREAM COMPLEX</scope>
</reference>
<reference key="14">
    <citation type="journal article" date="2009" name="Sci. Signal.">
        <title>Quantitative phosphoproteomic analysis of T cell receptor signaling reveals system-wide modulation of protein-protein interactions.</title>
        <authorList>
            <person name="Mayya V."/>
            <person name="Lundgren D.H."/>
            <person name="Hwang S.-I."/>
            <person name="Rezaul K."/>
            <person name="Wu L."/>
            <person name="Eng J.K."/>
            <person name="Rodionov V."/>
            <person name="Han D.K."/>
        </authorList>
    </citation>
    <scope>IDENTIFICATION BY MASS SPECTROMETRY [LARGE SCALE ANALYSIS]</scope>
    <source>
        <tissue>Leukemic T-cell</tissue>
    </source>
</reference>
<reference key="15">
    <citation type="journal article" date="2010" name="Mol. Cell. Biol.">
        <title>Repression of transcriptional activity of C/EBPalpha by E2F-dimerization partner complexes.</title>
        <authorList>
            <person name="Zaragoza K."/>
            <person name="Begay V."/>
            <person name="Schuetz A."/>
            <person name="Heinemann U."/>
            <person name="Leutz A."/>
        </authorList>
    </citation>
    <scope>FUNCTION</scope>
    <scope>INTERACTION WITH CEBPA</scope>
</reference>
<reference key="16">
    <citation type="journal article" date="2010" name="Sci. Signal.">
        <title>Quantitative phosphoproteomics reveals widespread full phosphorylation site occupancy during mitosis.</title>
        <authorList>
            <person name="Olsen J.V."/>
            <person name="Vermeulen M."/>
            <person name="Santamaria A."/>
            <person name="Kumar C."/>
            <person name="Miller M.L."/>
            <person name="Jensen L.J."/>
            <person name="Gnad F."/>
            <person name="Cox J."/>
            <person name="Jensen T.S."/>
            <person name="Nigg E.A."/>
            <person name="Brunak S."/>
            <person name="Mann M."/>
        </authorList>
    </citation>
    <scope>IDENTIFICATION BY MASS SPECTROMETRY [LARGE SCALE ANALYSIS]</scope>
    <source>
        <tissue>Cervix carcinoma</tissue>
    </source>
</reference>
<reference key="17">
    <citation type="journal article" date="2012" name="Proc. Natl. Acad. Sci. U.S.A.">
        <title>N-terminal acetylome analyses and functional insights of the N-terminal acetyltransferase NatB.</title>
        <authorList>
            <person name="Van Damme P."/>
            <person name="Lasa M."/>
            <person name="Polevoda B."/>
            <person name="Gazquez C."/>
            <person name="Elosegui-Artola A."/>
            <person name="Kim D.S."/>
            <person name="De Juan-Pardo E."/>
            <person name="Demeyer K."/>
            <person name="Hole K."/>
            <person name="Larrea E."/>
            <person name="Timmerman E."/>
            <person name="Prieto J."/>
            <person name="Arnesen T."/>
            <person name="Sherman F."/>
            <person name="Gevaert K."/>
            <person name="Aldabe R."/>
        </authorList>
    </citation>
    <scope>ACETYLATION [LARGE SCALE ANALYSIS] AT THR-2</scope>
    <scope>CLEAVAGE OF INITIATOR METHIONINE [LARGE SCALE ANALYSIS]</scope>
    <scope>IDENTIFICATION BY MASS SPECTROMETRY [LARGE SCALE ANALYSIS]</scope>
</reference>
<reference key="18">
    <citation type="journal article" date="2013" name="J. Proteome Res.">
        <title>Toward a comprehensive characterization of a human cancer cell phosphoproteome.</title>
        <authorList>
            <person name="Zhou H."/>
            <person name="Di Palma S."/>
            <person name="Preisinger C."/>
            <person name="Peng M."/>
            <person name="Polat A.N."/>
            <person name="Heck A.J."/>
            <person name="Mohammed S."/>
        </authorList>
    </citation>
    <scope>PHOSPHORYLATION [LARGE SCALE ANALYSIS] AT SER-24 AND SER-122</scope>
    <scope>IDENTIFICATION BY MASS SPECTROMETRY [LARGE SCALE ANALYSIS]</scope>
    <source>
        <tissue>Cervix carcinoma</tissue>
        <tissue>Erythroleukemia</tissue>
    </source>
</reference>
<reference key="19">
    <citation type="journal article" date="1999" name="Genes Dev.">
        <title>Structural basis of DNA recognition by the heterodimeric cell cycle transcription factor E2F-DP.</title>
        <authorList>
            <person name="Zheng N."/>
            <person name="Fraenkel E."/>
            <person name="Pabo C.O."/>
            <person name="Pavletich N.P."/>
        </authorList>
    </citation>
    <scope>X-RAY CRYSTALLOGRAPHY (2.6 ANGSTROMS) OF 121-215</scope>
</reference>
<comment type="function">
    <text evidence="16">Can stimulate E2F-dependent transcription. Binds DNA cooperatively with E2F family members through the E2 recognition site, 5'-TTTC[CG]CGC-3', found in the promoter region of a number of genes whose products are involved in cell cycle regulation or in DNA replication. The TFDP2:E2F complex functions in the control of cell-cycle progression from G1 to S phase. The E2F1:DP complex appears to mediate both cell proliferation and apoptosis. Blocks adipocyte differentiation by repressing CEBPA binding to its target gene promoters (PubMed:20176812).</text>
</comment>
<comment type="subunit">
    <text evidence="2 5 6">Component of the DRTF1/E2F transcription factor complex. Forms heterodimers with E2F family members. The complex can interact with hypophosphorylated retinoblastoma protein RB1 and related proteins (RBL1 and RBL2) that inhibit the E2F transactivation domain. During the cell cycle, RB becomes phosphorylated in mid-to-late G1 phase, detaches from the DRTF1/E2F complex rendering E2F transcriptionally active. Viral oncoproteins, notably E1A, T-antigen and HPV E7, are capable of sequestering RB protein, thus releasing the active complex. Interacts with GMCL (By similarity). Component of the DREAM complex (also named LINC complex) at least composed of E2F4, E2F5, LIN9, LIN37, LIN52, LIN54, MYBL1, MYBL2, RBL1, RBL2, RBBP4, TFDP1 and TFDP2. The complex exists in quiescent cells where it represses cell cycle-dependent genes. It dissociates in S phase when LIN9, LIN37, LIN52 and LIN54 form a subcomplex that binds to MYBL2. The complex TFDP2:E2F1 interacts with CEBPA; the interaction prevents CEBPA binding to target genes promoters and represses its transcriptional activity (PubMed:20176812).</text>
</comment>
<comment type="interaction">
    <interactant intactId="EBI-752268">
        <id>Q14188</id>
    </interactant>
    <interactant intactId="EBI-749694">
        <id>O75461</id>
        <label>E2F6</label>
    </interactant>
    <organismsDiffer>false</organismsDiffer>
    <experiments>11</experiments>
</comment>
<comment type="interaction">
    <interactant intactId="EBI-752268">
        <id>Q14188</id>
    </interactant>
    <interactant intactId="EBI-866453">
        <id>P03129</id>
        <label>E7</label>
    </interactant>
    <organismsDiffer>true</organismsDiffer>
    <experiments>2</experiments>
</comment>
<comment type="interaction">
    <interactant intactId="EBI-12181237">
        <id>Q14188-5</id>
    </interactant>
    <interactant intactId="EBI-448943">
        <id>Q16254</id>
        <label>E2F4</label>
    </interactant>
    <organismsDiffer>false</organismsDiffer>
    <experiments>3</experiments>
</comment>
<comment type="interaction">
    <interactant intactId="EBI-12181237">
        <id>Q14188-5</id>
    </interactant>
    <interactant intactId="EBI-749694">
        <id>O75461</id>
        <label>E2F6</label>
    </interactant>
    <organismsDiffer>false</organismsDiffer>
    <experiments>11</experiments>
</comment>
<comment type="subcellular location">
    <subcellularLocation>
        <location>Nucleus</location>
    </subcellularLocation>
</comment>
<comment type="alternative products">
    <event type="alternative splicing"/>
    <isoform>
        <id>Q14188-1</id>
        <name>Alpha</name>
        <name>49 kDa</name>
        <sequence type="displayed"/>
    </isoform>
    <isoform>
        <id>Q14188-2</id>
        <name>Beta</name>
        <name>43 kDa</name>
        <sequence type="described" ref="VSP_001352 VSP_001353"/>
    </isoform>
    <isoform>
        <id>Q14188-3</id>
        <name>Gamma</name>
        <sequence type="described" ref="VSP_001352 VSP_001353 VSP_001354"/>
    </isoform>
    <isoform>
        <id>Q14188-4</id>
        <name>Delta</name>
        <name>48 kDa</name>
        <sequence type="described" ref="VSP_001352"/>
    </isoform>
    <isoform>
        <id>Q14188-5</id>
        <name>Epsilon</name>
        <sequence type="described" ref="VSP_001352 VSP_001354"/>
    </isoform>
    <isoform>
        <id>Q14188-6</id>
        <name>6</name>
        <sequence type="described" ref="VSP_043140 VSP_043141"/>
    </isoform>
    <isoform>
        <id>Q14188-7</id>
        <name>7</name>
        <sequence type="described" ref="VSP_045455"/>
    </isoform>
    <isoform>
        <id>Q14188-8</id>
        <name>8</name>
        <sequence type="described" ref="VSP_047415"/>
    </isoform>
</comment>
<comment type="tissue specificity">
    <text>High levels in heart and skeletal muscle. Also found in placenta, kidney, brain, lung and liver. The presence as well as the abundance of the different transcripts appear to vary significantly in different tissues and cell lines.</text>
</comment>
<comment type="PTM">
    <text>Ser-24 is probably phosphorylated by CDK2.</text>
</comment>
<comment type="similarity">
    <text evidence="15">Belongs to the E2F/DP family.</text>
</comment>
<comment type="sequence caution" evidence="15">
    <conflict type="erroneous gene model prediction">
        <sequence resource="EMBL-CDS" id="AAR89905"/>
    </conflict>
</comment>
<comment type="sequence caution" evidence="15">
    <conflict type="erroneous initiation">
        <sequence resource="EMBL-CDS" id="CAB45775"/>
    </conflict>
    <text>Truncated N-terminus.</text>
</comment>
<name>TFDP2_HUMAN</name>
<dbReference type="EMBL" id="L40386">
    <property type="protein sequence ID" value="AAA69016.1"/>
    <property type="molecule type" value="mRNA"/>
</dbReference>
<dbReference type="EMBL" id="U18422">
    <property type="protein sequence ID" value="AAB60378.1"/>
    <property type="molecule type" value="mRNA"/>
</dbReference>
<dbReference type="EMBL" id="AY509596">
    <property type="protein sequence ID" value="AAR89905.1"/>
    <property type="status" value="ALT_SEQ"/>
    <property type="molecule type" value="Genomic_DNA"/>
</dbReference>
<dbReference type="EMBL" id="AK303181">
    <property type="protein sequence ID" value="BAH13914.1"/>
    <property type="molecule type" value="mRNA"/>
</dbReference>
<dbReference type="EMBL" id="AK303634">
    <property type="protein sequence ID" value="BAH14001.1"/>
    <property type="molecule type" value="mRNA"/>
</dbReference>
<dbReference type="EMBL" id="CR597951">
    <property type="status" value="NOT_ANNOTATED_CDS"/>
    <property type="molecule type" value="mRNA"/>
</dbReference>
<dbReference type="EMBL" id="AC108679">
    <property type="status" value="NOT_ANNOTATED_CDS"/>
    <property type="molecule type" value="Genomic_DNA"/>
</dbReference>
<dbReference type="EMBL" id="AC112504">
    <property type="status" value="NOT_ANNOTATED_CDS"/>
    <property type="molecule type" value="Genomic_DNA"/>
</dbReference>
<dbReference type="EMBL" id="AC128648">
    <property type="status" value="NOT_ANNOTATED_CDS"/>
    <property type="molecule type" value="Genomic_DNA"/>
</dbReference>
<dbReference type="EMBL" id="AC133435">
    <property type="status" value="NOT_ANNOTATED_CDS"/>
    <property type="molecule type" value="Genomic_DNA"/>
</dbReference>
<dbReference type="EMBL" id="CH471052">
    <property type="protein sequence ID" value="EAW78977.1"/>
    <property type="molecule type" value="Genomic_DNA"/>
</dbReference>
<dbReference type="EMBL" id="CH471052">
    <property type="protein sequence ID" value="EAW78981.1"/>
    <property type="molecule type" value="Genomic_DNA"/>
</dbReference>
<dbReference type="EMBL" id="BC021113">
    <property type="protein sequence ID" value="AAH21113.1"/>
    <property type="molecule type" value="mRNA"/>
</dbReference>
<dbReference type="EMBL" id="U75488">
    <property type="protein sequence ID" value="AAB37321.1"/>
    <property type="molecule type" value="mRNA"/>
</dbReference>
<dbReference type="EMBL" id="AL080206">
    <property type="protein sequence ID" value="CAB45775.2"/>
    <property type="status" value="ALT_INIT"/>
    <property type="molecule type" value="mRNA"/>
</dbReference>
<dbReference type="EMBL" id="U35117">
    <property type="protein sequence ID" value="AAC50642.1"/>
    <property type="molecule type" value="mRNA"/>
</dbReference>
<dbReference type="CCDS" id="CCDS43159.1">
    <molecule id="Q14188-5"/>
</dbReference>
<dbReference type="CCDS" id="CCDS54647.1">
    <molecule id="Q14188-7"/>
</dbReference>
<dbReference type="CCDS" id="CCDS54648.1">
    <molecule id="Q14188-8"/>
</dbReference>
<dbReference type="CCDS" id="CCDS54649.1">
    <molecule id="Q14188-6"/>
</dbReference>
<dbReference type="CCDS" id="CCDS54650.1">
    <molecule id="Q14188-1"/>
</dbReference>
<dbReference type="CCDS" id="CCDS93401.1">
    <molecule id="Q14188-4"/>
</dbReference>
<dbReference type="RefSeq" id="NP_001171609.1">
    <molecule id="Q14188-5"/>
    <property type="nucleotide sequence ID" value="NM_001178138.2"/>
</dbReference>
<dbReference type="RefSeq" id="NP_001171610.1">
    <molecule id="Q14188-1"/>
    <property type="nucleotide sequence ID" value="NM_001178139.2"/>
</dbReference>
<dbReference type="RefSeq" id="NP_001171611.1">
    <molecule id="Q14188-8"/>
    <property type="nucleotide sequence ID" value="NM_001178140.2"/>
</dbReference>
<dbReference type="RefSeq" id="NP_001171612.1">
    <molecule id="Q14188-6"/>
    <property type="nucleotide sequence ID" value="NM_001178141.2"/>
</dbReference>
<dbReference type="RefSeq" id="NP_001171613.1">
    <molecule id="Q14188-7"/>
    <property type="nucleotide sequence ID" value="NM_001178142.2"/>
</dbReference>
<dbReference type="RefSeq" id="NP_001362685.1">
    <molecule id="Q14188-4"/>
    <property type="nucleotide sequence ID" value="NM_001375756.1"/>
</dbReference>
<dbReference type="RefSeq" id="NP_001362705.1">
    <molecule id="Q14188-5"/>
    <property type="nucleotide sequence ID" value="NM_001375776.1"/>
</dbReference>
<dbReference type="RefSeq" id="NP_001362707.1">
    <molecule id="Q14188-4"/>
    <property type="nucleotide sequence ID" value="NM_001375778.1"/>
</dbReference>
<dbReference type="RefSeq" id="NP_006277.1">
    <molecule id="Q14188-5"/>
    <property type="nucleotide sequence ID" value="NM_006286.5"/>
</dbReference>
<dbReference type="RefSeq" id="XP_016862580.1">
    <molecule id="Q14188-1"/>
    <property type="nucleotide sequence ID" value="XM_017007091.2"/>
</dbReference>
<dbReference type="RefSeq" id="XP_016862585.1">
    <property type="nucleotide sequence ID" value="XM_017007096.1"/>
</dbReference>
<dbReference type="RefSeq" id="XP_016862586.1">
    <property type="nucleotide sequence ID" value="XM_017007097.1"/>
</dbReference>
<dbReference type="RefSeq" id="XP_016862587.1">
    <property type="nucleotide sequence ID" value="XM_017007098.1"/>
</dbReference>
<dbReference type="RefSeq" id="XP_016862588.1">
    <property type="nucleotide sequence ID" value="XM_017007099.1"/>
</dbReference>
<dbReference type="RefSeq" id="XP_047304737.1">
    <molecule id="Q14188-5"/>
    <property type="nucleotide sequence ID" value="XM_047448781.1"/>
</dbReference>
<dbReference type="RefSeq" id="XP_047304738.1">
    <molecule id="Q14188-4"/>
    <property type="nucleotide sequence ID" value="XM_047448782.1"/>
</dbReference>
<dbReference type="RefSeq" id="XP_054203625.1">
    <molecule id="Q14188-1"/>
    <property type="nucleotide sequence ID" value="XM_054347650.1"/>
</dbReference>
<dbReference type="RefSeq" id="XP_054203626.1">
    <molecule id="Q14188-1"/>
    <property type="nucleotide sequence ID" value="XM_054347651.1"/>
</dbReference>
<dbReference type="PDB" id="1CF7">
    <property type="method" value="X-ray"/>
    <property type="resolution" value="2.60 A"/>
    <property type="chains" value="B=121-215"/>
</dbReference>
<dbReference type="PDBsum" id="1CF7"/>
<dbReference type="SMR" id="Q14188"/>
<dbReference type="BioGRID" id="112887">
    <property type="interactions" value="54"/>
</dbReference>
<dbReference type="ComplexPortal" id="CPX-2368">
    <property type="entry name" value="DREAM transcriptional repressor complex, RBL1 variant"/>
</dbReference>
<dbReference type="ComplexPortal" id="CPX-7461">
    <property type="entry name" value="DREAM transcriptional repressor complex, RBL2 variant"/>
</dbReference>
<dbReference type="DIP" id="DIP-294N"/>
<dbReference type="FunCoup" id="Q14188">
    <property type="interactions" value="2321"/>
</dbReference>
<dbReference type="IntAct" id="Q14188">
    <property type="interactions" value="46"/>
</dbReference>
<dbReference type="MINT" id="Q14188"/>
<dbReference type="STRING" id="9606.ENSP00000420616"/>
<dbReference type="BindingDB" id="Q14188"/>
<dbReference type="ChEMBL" id="CHEMBL4105986"/>
<dbReference type="iPTMnet" id="Q14188"/>
<dbReference type="PhosphoSitePlus" id="Q14188"/>
<dbReference type="BioMuta" id="TFDP2"/>
<dbReference type="DMDM" id="8039810"/>
<dbReference type="jPOST" id="Q14188"/>
<dbReference type="MassIVE" id="Q14188"/>
<dbReference type="PaxDb" id="9606-ENSP00000420616"/>
<dbReference type="PeptideAtlas" id="Q14188"/>
<dbReference type="ProteomicsDB" id="20073"/>
<dbReference type="ProteomicsDB" id="30503"/>
<dbReference type="ProteomicsDB" id="59905">
    <molecule id="Q14188-1"/>
</dbReference>
<dbReference type="ProteomicsDB" id="59906">
    <molecule id="Q14188-2"/>
</dbReference>
<dbReference type="ProteomicsDB" id="59907">
    <molecule id="Q14188-3"/>
</dbReference>
<dbReference type="ProteomicsDB" id="59908">
    <molecule id="Q14188-4"/>
</dbReference>
<dbReference type="ProteomicsDB" id="59909">
    <molecule id="Q14188-5"/>
</dbReference>
<dbReference type="ProteomicsDB" id="59910">
    <molecule id="Q14188-6"/>
</dbReference>
<dbReference type="Antibodypedia" id="4341">
    <property type="antibodies" value="239 antibodies from 32 providers"/>
</dbReference>
<dbReference type="DNASU" id="7029"/>
<dbReference type="Ensembl" id="ENST00000467072.5">
    <molecule id="Q14188-5"/>
    <property type="protein sequence ID" value="ENSP00000418590.1"/>
    <property type="gene ID" value="ENSG00000114126.18"/>
</dbReference>
<dbReference type="Ensembl" id="ENST00000477292.5">
    <molecule id="Q14188-7"/>
    <property type="protein sequence ID" value="ENSP00000418971.1"/>
    <property type="gene ID" value="ENSG00000114126.18"/>
</dbReference>
<dbReference type="Ensembl" id="ENST00000479040.5">
    <molecule id="Q14188-4"/>
    <property type="protein sequence ID" value="ENSP00000417585.1"/>
    <property type="gene ID" value="ENSG00000114126.18"/>
</dbReference>
<dbReference type="Ensembl" id="ENST00000486111.5">
    <molecule id="Q14188-5"/>
    <property type="protein sequence ID" value="ENSP00000420599.1"/>
    <property type="gene ID" value="ENSG00000114126.18"/>
</dbReference>
<dbReference type="Ensembl" id="ENST00000489671.6">
    <molecule id="Q14188-1"/>
    <property type="protein sequence ID" value="ENSP00000420616.1"/>
    <property type="gene ID" value="ENSG00000114126.18"/>
</dbReference>
<dbReference type="Ensembl" id="ENST00000495310.5">
    <molecule id="Q14188-6"/>
    <property type="protein sequence ID" value="ENSP00000419036.1"/>
    <property type="gene ID" value="ENSG00000114126.18"/>
</dbReference>
<dbReference type="Ensembl" id="ENST00000499676.5">
    <molecule id="Q14188-8"/>
    <property type="protein sequence ID" value="ENSP00000439782.2"/>
    <property type="gene ID" value="ENSG00000114126.18"/>
</dbReference>
<dbReference type="GeneID" id="7029"/>
<dbReference type="KEGG" id="hsa:7029"/>
<dbReference type="MANE-Select" id="ENST00000489671.6">
    <property type="protein sequence ID" value="ENSP00000420616.1"/>
    <property type="RefSeq nucleotide sequence ID" value="NM_001178139.2"/>
    <property type="RefSeq protein sequence ID" value="NP_001171610.1"/>
</dbReference>
<dbReference type="UCSC" id="uc003euk.5">
    <molecule id="Q14188-1"/>
    <property type="organism name" value="human"/>
</dbReference>
<dbReference type="AGR" id="HGNC:11751"/>
<dbReference type="CTD" id="7029"/>
<dbReference type="DisGeNET" id="7029"/>
<dbReference type="GeneCards" id="TFDP2"/>
<dbReference type="HGNC" id="HGNC:11751">
    <property type="gene designation" value="TFDP2"/>
</dbReference>
<dbReference type="HPA" id="ENSG00000114126">
    <property type="expression patterns" value="Tissue enhanced (lymphoid)"/>
</dbReference>
<dbReference type="MIM" id="602160">
    <property type="type" value="gene"/>
</dbReference>
<dbReference type="neXtProt" id="NX_Q14188"/>
<dbReference type="OpenTargets" id="ENSG00000114126"/>
<dbReference type="PharmGKB" id="PA36466"/>
<dbReference type="VEuPathDB" id="HostDB:ENSG00000114126"/>
<dbReference type="eggNOG" id="KOG2829">
    <property type="taxonomic scope" value="Eukaryota"/>
</dbReference>
<dbReference type="GeneTree" id="ENSGT00940000157909"/>
<dbReference type="HOGENOM" id="CLU_039874_3_1_1"/>
<dbReference type="InParanoid" id="Q14188"/>
<dbReference type="OMA" id="DMSAGIC"/>
<dbReference type="OrthoDB" id="552115at2759"/>
<dbReference type="PAN-GO" id="Q14188">
    <property type="GO annotations" value="4 GO annotations based on evolutionary models"/>
</dbReference>
<dbReference type="PhylomeDB" id="Q14188"/>
<dbReference type="TreeFam" id="TF314396"/>
<dbReference type="PathwayCommons" id="Q14188"/>
<dbReference type="Reactome" id="R-HSA-111448">
    <property type="pathway name" value="Activation of NOXA and translocation to mitochondria"/>
</dbReference>
<dbReference type="Reactome" id="R-HSA-113501">
    <property type="pathway name" value="Inhibition of replication initiation of damaged DNA by RB1/E2F1"/>
</dbReference>
<dbReference type="Reactome" id="R-HSA-1362277">
    <property type="pathway name" value="Transcription of E2F targets under negative control by DREAM complex"/>
</dbReference>
<dbReference type="Reactome" id="R-HSA-1362300">
    <property type="pathway name" value="Transcription of E2F targets under negative control by p107 (RBL1) and p130 (RBL2) in complex with HDAC1"/>
</dbReference>
<dbReference type="Reactome" id="R-HSA-139915">
    <property type="pathway name" value="Activation of PUMA and translocation to mitochondria"/>
</dbReference>
<dbReference type="Reactome" id="R-HSA-1538133">
    <property type="pathway name" value="G0 and Early G1"/>
</dbReference>
<dbReference type="Reactome" id="R-HSA-1912408">
    <property type="pathway name" value="Pre-NOTCH Transcription and Translation"/>
</dbReference>
<dbReference type="Reactome" id="R-HSA-2173796">
    <property type="pathway name" value="SMAD2/SMAD3:SMAD4 heterotrimer regulates transcription"/>
</dbReference>
<dbReference type="Reactome" id="R-HSA-2559580">
    <property type="pathway name" value="Oxidative Stress Induced Senescence"/>
</dbReference>
<dbReference type="Reactome" id="R-HSA-2559585">
    <property type="pathway name" value="Oncogene Induced Senescence"/>
</dbReference>
<dbReference type="Reactome" id="R-HSA-6804114">
    <property type="pathway name" value="TP53 Regulates Transcription of Genes Involved in G2 Cell Cycle Arrest"/>
</dbReference>
<dbReference type="Reactome" id="R-HSA-69202">
    <property type="pathway name" value="Cyclin E associated events during G1/S transition"/>
</dbReference>
<dbReference type="Reactome" id="R-HSA-69205">
    <property type="pathway name" value="G1/S-Specific Transcription"/>
</dbReference>
<dbReference type="Reactome" id="R-HSA-69231">
    <property type="pathway name" value="Cyclin D associated events in G1"/>
</dbReference>
<dbReference type="Reactome" id="R-HSA-69656">
    <property type="pathway name" value="Cyclin A:Cdk2-associated events at S phase entry"/>
</dbReference>
<dbReference type="Reactome" id="R-HSA-8953750">
    <property type="pathway name" value="Transcriptional Regulation by E2F6"/>
</dbReference>
<dbReference type="Reactome" id="R-HSA-9616222">
    <property type="pathway name" value="Transcriptional regulation of granulopoiesis"/>
</dbReference>
<dbReference type="Reactome" id="R-HSA-9661069">
    <property type="pathway name" value="Defective binding of RB1 mutants to E2F1,(E2F2, E2F3)"/>
</dbReference>
<dbReference type="SignaLink" id="Q14188"/>
<dbReference type="BioGRID-ORCS" id="7029">
    <property type="hits" value="14 hits in 1189 CRISPR screens"/>
</dbReference>
<dbReference type="ChiTaRS" id="TFDP2">
    <property type="organism name" value="human"/>
</dbReference>
<dbReference type="EvolutionaryTrace" id="Q14188"/>
<dbReference type="GeneWiki" id="TFDP2"/>
<dbReference type="GenomeRNAi" id="7029"/>
<dbReference type="Pharos" id="Q14188">
    <property type="development level" value="Tbio"/>
</dbReference>
<dbReference type="PRO" id="PR:Q14188"/>
<dbReference type="Proteomes" id="UP000005640">
    <property type="component" value="Chromosome 3"/>
</dbReference>
<dbReference type="RNAct" id="Q14188">
    <property type="molecule type" value="protein"/>
</dbReference>
<dbReference type="Bgee" id="ENSG00000114126">
    <property type="expression patterns" value="Expressed in calcaneal tendon and 197 other cell types or tissues"/>
</dbReference>
<dbReference type="ExpressionAtlas" id="Q14188">
    <property type="expression patterns" value="baseline and differential"/>
</dbReference>
<dbReference type="GO" id="GO:0000785">
    <property type="term" value="C:chromatin"/>
    <property type="evidence" value="ECO:0000247"/>
    <property type="project" value="NTNU_SB"/>
</dbReference>
<dbReference type="GO" id="GO:0072686">
    <property type="term" value="C:mitotic spindle"/>
    <property type="evidence" value="ECO:0000314"/>
    <property type="project" value="HPA"/>
</dbReference>
<dbReference type="GO" id="GO:0005654">
    <property type="term" value="C:nucleoplasm"/>
    <property type="evidence" value="ECO:0000314"/>
    <property type="project" value="HPA"/>
</dbReference>
<dbReference type="GO" id="GO:0005634">
    <property type="term" value="C:nucleus"/>
    <property type="evidence" value="ECO:0000318"/>
    <property type="project" value="GO_Central"/>
</dbReference>
<dbReference type="GO" id="GO:0090575">
    <property type="term" value="C:RNA polymerase II transcription regulator complex"/>
    <property type="evidence" value="ECO:0000314"/>
    <property type="project" value="NTNU_SB"/>
</dbReference>
<dbReference type="GO" id="GO:0003677">
    <property type="term" value="F:DNA binding"/>
    <property type="evidence" value="ECO:0007669"/>
    <property type="project" value="UniProtKB-KW"/>
</dbReference>
<dbReference type="GO" id="GO:0000981">
    <property type="term" value="F:DNA-binding transcription factor activity, RNA polymerase II-specific"/>
    <property type="evidence" value="ECO:0000247"/>
    <property type="project" value="NTNU_SB"/>
</dbReference>
<dbReference type="GO" id="GO:0019904">
    <property type="term" value="F:protein domain specific binding"/>
    <property type="evidence" value="ECO:0000353"/>
    <property type="project" value="UniProtKB"/>
</dbReference>
<dbReference type="GO" id="GO:0008134">
    <property type="term" value="F:transcription factor binding"/>
    <property type="evidence" value="ECO:0000353"/>
    <property type="project" value="GO_Central"/>
</dbReference>
<dbReference type="GO" id="GO:0045892">
    <property type="term" value="P:negative regulation of DNA-templated transcription"/>
    <property type="evidence" value="ECO:0000314"/>
    <property type="project" value="UniProtKB"/>
</dbReference>
<dbReference type="GO" id="GO:0045944">
    <property type="term" value="P:positive regulation of transcription by RNA polymerase II"/>
    <property type="evidence" value="ECO:0000314"/>
    <property type="project" value="NTNU_SB"/>
</dbReference>
<dbReference type="GO" id="GO:0051726">
    <property type="term" value="P:regulation of cell cycle"/>
    <property type="evidence" value="ECO:0007669"/>
    <property type="project" value="InterPro"/>
</dbReference>
<dbReference type="GO" id="GO:0006357">
    <property type="term" value="P:regulation of transcription by RNA polymerase II"/>
    <property type="evidence" value="ECO:0000318"/>
    <property type="project" value="GO_Central"/>
</dbReference>
<dbReference type="CDD" id="cd14458">
    <property type="entry name" value="DP_DD"/>
    <property type="match status" value="1"/>
</dbReference>
<dbReference type="FunFam" id="1.10.10.10:FF:000047">
    <property type="entry name" value="Transcription factor"/>
    <property type="match status" value="1"/>
</dbReference>
<dbReference type="FunFam" id="1.20.140.80:FF:000001">
    <property type="entry name" value="Transcription factor"/>
    <property type="match status" value="1"/>
</dbReference>
<dbReference type="Gene3D" id="1.20.140.80">
    <property type="entry name" value="Transcription factor DP"/>
    <property type="match status" value="1"/>
</dbReference>
<dbReference type="Gene3D" id="1.10.10.10">
    <property type="entry name" value="Winged helix-like DNA-binding domain superfamily/Winged helix DNA-binding domain"/>
    <property type="match status" value="1"/>
</dbReference>
<dbReference type="InterPro" id="IPR037241">
    <property type="entry name" value="E2F-DP_heterodim"/>
</dbReference>
<dbReference type="InterPro" id="IPR003316">
    <property type="entry name" value="E2F_WHTH_DNA-bd_dom"/>
</dbReference>
<dbReference type="InterPro" id="IPR038168">
    <property type="entry name" value="TF_DP_C_sf"/>
</dbReference>
<dbReference type="InterPro" id="IPR014889">
    <property type="entry name" value="Transc_factor_DP_C"/>
</dbReference>
<dbReference type="InterPro" id="IPR015648">
    <property type="entry name" value="Transcrpt_fac_DP"/>
</dbReference>
<dbReference type="InterPro" id="IPR036388">
    <property type="entry name" value="WH-like_DNA-bd_sf"/>
</dbReference>
<dbReference type="InterPro" id="IPR036390">
    <property type="entry name" value="WH_DNA-bd_sf"/>
</dbReference>
<dbReference type="PANTHER" id="PTHR12548">
    <property type="entry name" value="TRANSCRIPTION FACTOR DP"/>
    <property type="match status" value="1"/>
</dbReference>
<dbReference type="PANTHER" id="PTHR12548:SF5">
    <property type="entry name" value="TRANSCRIPTION FACTOR DP-2"/>
    <property type="match status" value="1"/>
</dbReference>
<dbReference type="Pfam" id="PF08781">
    <property type="entry name" value="DP"/>
    <property type="match status" value="1"/>
</dbReference>
<dbReference type="Pfam" id="PF02319">
    <property type="entry name" value="E2F_TDP"/>
    <property type="match status" value="1"/>
</dbReference>
<dbReference type="PIRSF" id="PIRSF009404">
    <property type="entry name" value="Transcription_factor_DP"/>
    <property type="match status" value="1"/>
</dbReference>
<dbReference type="SMART" id="SM01138">
    <property type="entry name" value="DP"/>
    <property type="match status" value="1"/>
</dbReference>
<dbReference type="SMART" id="SM01372">
    <property type="entry name" value="E2F_TDP"/>
    <property type="match status" value="1"/>
</dbReference>
<dbReference type="SUPFAM" id="SSF144074">
    <property type="entry name" value="E2F-DP heterodimerization region"/>
    <property type="match status" value="1"/>
</dbReference>
<dbReference type="SUPFAM" id="SSF46785">
    <property type="entry name" value="Winged helix' DNA-binding domain"/>
    <property type="match status" value="1"/>
</dbReference>
<sequence length="446" mass="49236">MTAKNVGLTSTNAEVRGFIDQNLSPTKGNISFVAFPVSNTNSPTKILPKTLGPINVNVGPQMIISTPQRLTSSGSVLIGSPYTPAPAMVTQTHIAEATGWVPGDRKRARKFIDSDFSESKRSKKGDKNGKGLRHFSMKVCEKVQRKGTTSYNEVADELVSEFTNSNNHLAADSAYDQKNIRRRVYDALNVLMAMNIISKEKKEIKWIGLPTNSAQECQNLEIEKQRRIERIKQKRAQLQELLLQQIAFKNLVQRNRQNEQQNQGPPALNSTIQLPFIIINTSRKTVIDCSISSDKFEYLFNFDNTFEIHDDIEVLKRMGMSFGLESGKCSLEDLKLAKSLVPKALEGYITDISTGPSWLNQGLLLNSTQSVSNLDLTTGATLPQSSVNQGLCLDAEVALATGQFLAPNSHQSSSAASHCSESRGETPCSFNDEDEEDDEEDSSSPE</sequence>
<protein>
    <recommendedName>
        <fullName>Transcription factor Dp-2</fullName>
    </recommendedName>
    <alternativeName>
        <fullName>E2F dimerization partner 2</fullName>
    </alternativeName>
</protein>
<evidence type="ECO:0000250" key="1"/>
<evidence type="ECO:0000250" key="2">
    <source>
        <dbReference type="UniProtKB" id="Q64163"/>
    </source>
</evidence>
<evidence type="ECO:0000255" key="3"/>
<evidence type="ECO:0000256" key="4">
    <source>
        <dbReference type="SAM" id="MobiDB-lite"/>
    </source>
</evidence>
<evidence type="ECO:0000269" key="5">
    <source>
    </source>
</evidence>
<evidence type="ECO:0000269" key="6">
    <source>
    </source>
</evidence>
<evidence type="ECO:0000269" key="7">
    <source>
    </source>
</evidence>
<evidence type="ECO:0000269" key="8">
    <source ref="3"/>
</evidence>
<evidence type="ECO:0000303" key="9">
    <source>
    </source>
</evidence>
<evidence type="ECO:0000303" key="10">
    <source>
    </source>
</evidence>
<evidence type="ECO:0000303" key="11">
    <source>
    </source>
</evidence>
<evidence type="ECO:0000303" key="12">
    <source>
    </source>
</evidence>
<evidence type="ECO:0000303" key="13">
    <source>
    </source>
</evidence>
<evidence type="ECO:0000303" key="14">
    <source>
    </source>
</evidence>
<evidence type="ECO:0000305" key="15"/>
<evidence type="ECO:0000305" key="16">
    <source>
    </source>
</evidence>
<evidence type="ECO:0007744" key="17">
    <source>
    </source>
</evidence>
<evidence type="ECO:0007744" key="18">
    <source>
    </source>
</evidence>
<evidence type="ECO:0007829" key="19">
    <source>
        <dbReference type="PDB" id="1CF7"/>
    </source>
</evidence>
<keyword id="KW-0002">3D-structure</keyword>
<keyword id="KW-0007">Acetylation</keyword>
<keyword id="KW-0010">Activator</keyword>
<keyword id="KW-0025">Alternative splicing</keyword>
<keyword id="KW-0131">Cell cycle</keyword>
<keyword id="KW-0238">DNA-binding</keyword>
<keyword id="KW-0539">Nucleus</keyword>
<keyword id="KW-0597">Phosphoprotein</keyword>
<keyword id="KW-1267">Proteomics identification</keyword>
<keyword id="KW-1185">Reference proteome</keyword>
<keyword id="KW-0804">Transcription</keyword>
<keyword id="KW-0805">Transcription regulation</keyword>
<feature type="initiator methionine" description="Removed" evidence="17">
    <location>
        <position position="1"/>
    </location>
</feature>
<feature type="chain" id="PRO_0000219477" description="Transcription factor Dp-2">
    <location>
        <begin position="2"/>
        <end position="446"/>
    </location>
</feature>
<feature type="DNA-binding region" evidence="3">
    <location>
        <begin position="129"/>
        <end position="210"/>
    </location>
</feature>
<feature type="region of interest" description="Interaction with CEBPA" evidence="7">
    <location>
        <begin position="60"/>
        <end position="82"/>
    </location>
</feature>
<feature type="region of interest" description="Dimerization" evidence="3">
    <location>
        <begin position="219"/>
        <end position="292"/>
    </location>
</feature>
<feature type="region of interest" description="DCB1">
    <location>
        <begin position="229"/>
        <end position="261"/>
    </location>
</feature>
<feature type="region of interest" description="DCB2">
    <location>
        <begin position="274"/>
        <end position="330"/>
    </location>
</feature>
<feature type="region of interest" description="Disordered" evidence="4">
    <location>
        <begin position="409"/>
        <end position="446"/>
    </location>
</feature>
<feature type="short sequence motif" description="Nuclear localization signal" evidence="1">
    <location>
        <begin position="103"/>
        <end position="118"/>
    </location>
</feature>
<feature type="short sequence motif" description="DEF box">
    <location>
        <begin position="176"/>
        <end position="210"/>
    </location>
</feature>
<feature type="compositionally biased region" description="Low complexity" evidence="4">
    <location>
        <begin position="409"/>
        <end position="419"/>
    </location>
</feature>
<feature type="compositionally biased region" description="Acidic residues" evidence="4">
    <location>
        <begin position="431"/>
        <end position="446"/>
    </location>
</feature>
<feature type="modified residue" description="N-acetylthreonine" evidence="17">
    <location>
        <position position="2"/>
    </location>
</feature>
<feature type="modified residue" description="Phosphoserine" evidence="18">
    <location>
        <position position="24"/>
    </location>
</feature>
<feature type="modified residue" description="Phosphoserine" evidence="18">
    <location>
        <position position="122"/>
    </location>
</feature>
<feature type="splice variant" id="VSP_045455" description="In isoform 7." evidence="9">
    <location>
        <begin position="1"/>
        <end position="136"/>
    </location>
</feature>
<feature type="splice variant" id="VSP_047415" description="In isoform 8." evidence="11">
    <original>MTAKNVGLTSTNAEVRGFIDQNLSPTKGNISFVAFPVSNTNSPTKILPKTLGPINVNVGPQM</original>
    <variation>MQPEGIIFEAENKPSPGTESAGTFILDLSATSRT</variation>
    <location>
        <begin position="1"/>
        <end position="62"/>
    </location>
</feature>
<feature type="splice variant" id="VSP_001352" description="In isoform Beta, isoform Gamma, isoform Delta and isoform Epsilon." evidence="10 12 13 14">
    <location>
        <begin position="1"/>
        <end position="61"/>
    </location>
</feature>
<feature type="splice variant" id="VSP_043140" description="In isoform 6." evidence="9">
    <original>MTAKNV</original>
    <variation>MLDPKC</variation>
    <location>
        <begin position="1"/>
        <end position="6"/>
    </location>
</feature>
<feature type="splice variant" id="VSP_043141" description="In isoform 6." evidence="9">
    <location>
        <begin position="7"/>
        <end position="103"/>
    </location>
</feature>
<feature type="splice variant" id="VSP_001353" description="In isoform Beta and isoform Gamma." evidence="15">
    <location>
        <begin position="103"/>
        <end position="118"/>
    </location>
</feature>
<feature type="splice variant" id="VSP_001354" description="In isoform Gamma and isoform Epsilon." evidence="10 13">
    <original>S</original>
    <variation>SQ</variation>
    <location>
        <position position="173"/>
    </location>
</feature>
<feature type="sequence variant" id="VAR_002272" description="In dbSNP:rs748095099.">
    <original>I</original>
    <variation>T</variation>
    <location>
        <position position="64"/>
    </location>
</feature>
<feature type="sequence variant" id="VAR_020567" description="In dbSNP:rs11569200." evidence="8">
    <original>P</original>
    <variation>S</variation>
    <location>
        <position position="81"/>
    </location>
</feature>
<feature type="sequence conflict" description="In Ref. 4; BAH13914." evidence="15" ref="4">
    <original>N</original>
    <variation>S</variation>
    <location>
        <position position="269"/>
    </location>
</feature>
<feature type="helix" evidence="19">
    <location>
        <begin position="131"/>
        <end position="146"/>
    </location>
</feature>
<feature type="strand" evidence="19">
    <location>
        <begin position="147"/>
        <end position="149"/>
    </location>
</feature>
<feature type="helix" evidence="19">
    <location>
        <begin position="151"/>
        <end position="163"/>
    </location>
</feature>
<feature type="helix" evidence="19">
    <location>
        <begin position="170"/>
        <end position="172"/>
    </location>
</feature>
<feature type="helix" evidence="19">
    <location>
        <begin position="174"/>
        <end position="193"/>
    </location>
</feature>
<feature type="strand" evidence="19">
    <location>
        <begin position="204"/>
        <end position="206"/>
    </location>
</feature>
<proteinExistence type="evidence at protein level"/>
<accession>Q14188</accession>
<accession>B7Z8C8</accession>
<accession>B7Z8L5</accession>
<accession>D3DNG1</accession>
<accession>E9PFC3</accession>
<accession>F8WAI2</accession>
<accession>Q13331</accession>
<accession>Q14187</accession>
<accession>Q6R754</accession>
<accession>Q8WU88</accession>
<accession>Q9UG28</accession>
<organism>
    <name type="scientific">Homo sapiens</name>
    <name type="common">Human</name>
    <dbReference type="NCBI Taxonomy" id="9606"/>
    <lineage>
        <taxon>Eukaryota</taxon>
        <taxon>Metazoa</taxon>
        <taxon>Chordata</taxon>
        <taxon>Craniata</taxon>
        <taxon>Vertebrata</taxon>
        <taxon>Euteleostomi</taxon>
        <taxon>Mammalia</taxon>
        <taxon>Eutheria</taxon>
        <taxon>Euarchontoglires</taxon>
        <taxon>Primates</taxon>
        <taxon>Haplorrhini</taxon>
        <taxon>Catarrhini</taxon>
        <taxon>Hominidae</taxon>
        <taxon>Homo</taxon>
    </lineage>
</organism>